<comment type="function">
    <text evidence="2">Muscle inhibiting agent. Involved in the neural control of the visceral muscles of the heart, accessory glands and oviduct. May be involved in the regulation of saliva secretion.</text>
</comment>
<comment type="subcellular location">
    <subcellularLocation>
        <location evidence="2">Secreted</location>
    </subcellularLocation>
</comment>
<comment type="tissue specificity">
    <text evidence="2">Found in axons of the male accessory glands, the salivary glands, the heart, and the oviduct.</text>
</comment>
<comment type="similarity">
    <text evidence="4">Belongs to the FARP (FMRFamide related peptide) family.</text>
</comment>
<comment type="caution">
    <text evidence="5">The name PDVDHFLRFamide is erroneously given in the title of Schoofs et al., 1993, since a Val residue is missing compared to the sequence shown in the paper.</text>
</comment>
<evidence type="ECO:0000250" key="1">
    <source>
        <dbReference type="UniProtKB" id="P84307"/>
    </source>
</evidence>
<evidence type="ECO:0000269" key="2">
    <source>
    </source>
</evidence>
<evidence type="ECO:0000303" key="3">
    <source>
    </source>
</evidence>
<evidence type="ECO:0000305" key="4"/>
<evidence type="ECO:0000305" key="5">
    <source>
    </source>
</evidence>
<name>FARP_LOCMI</name>
<sequence length="10" mass="1244">PDVDHVFLRF</sequence>
<accession>P84306</accession>
<accession>P38553</accession>
<keyword id="KW-0027">Amidation</keyword>
<keyword id="KW-0903">Direct protein sequencing</keyword>
<keyword id="KW-0527">Neuropeptide</keyword>
<keyword id="KW-0964">Secreted</keyword>
<feature type="peptide" id="PRO_0000043682" description="SchistoFLRFamide" evidence="2">
    <location>
        <begin position="1"/>
        <end position="10"/>
    </location>
</feature>
<feature type="modified residue" description="Phenylalanine amide" evidence="2">
    <location>
        <position position="10"/>
    </location>
</feature>
<organism>
    <name type="scientific">Locusta migratoria</name>
    <name type="common">Migratory locust</name>
    <dbReference type="NCBI Taxonomy" id="7004"/>
    <lineage>
        <taxon>Eukaryota</taxon>
        <taxon>Metazoa</taxon>
        <taxon>Ecdysozoa</taxon>
        <taxon>Arthropoda</taxon>
        <taxon>Hexapoda</taxon>
        <taxon>Insecta</taxon>
        <taxon>Pterygota</taxon>
        <taxon>Neoptera</taxon>
        <taxon>Polyneoptera</taxon>
        <taxon>Orthoptera</taxon>
        <taxon>Caelifera</taxon>
        <taxon>Acrididea</taxon>
        <taxon>Acridomorpha</taxon>
        <taxon>Acridoidea</taxon>
        <taxon>Acrididae</taxon>
        <taxon>Oedipodinae</taxon>
        <taxon>Locusta</taxon>
    </lineage>
</organism>
<proteinExistence type="evidence at protein level"/>
<dbReference type="GO" id="GO:0005576">
    <property type="term" value="C:extracellular region"/>
    <property type="evidence" value="ECO:0007669"/>
    <property type="project" value="UniProtKB-SubCell"/>
</dbReference>
<dbReference type="GO" id="GO:0007218">
    <property type="term" value="P:neuropeptide signaling pathway"/>
    <property type="evidence" value="ECO:0007669"/>
    <property type="project" value="UniProtKB-KW"/>
</dbReference>
<protein>
    <recommendedName>
        <fullName evidence="3">SchistoFLRFamide</fullName>
    </recommendedName>
    <alternativeName>
        <fullName evidence="1">Cardioexcitatory neuropeptide</fullName>
    </alternativeName>
    <alternativeName>
        <fullName evidence="5">PDVDHVFLRF-amide</fullName>
    </alternativeName>
</protein>
<reference key="1">
    <citation type="journal article" date="1993" name="Peptides">
        <title>Isolation, identification, and synthesis of PDVDHFLRFamide (SchistoFLRFamide) in Locusta migratoria and its association with the male accessory glands, the salivary glands, the heart, and the oviduct.</title>
        <authorList>
            <person name="Schoofs L."/>
            <person name="Holman G.M."/>
            <person name="Paemen L."/>
            <person name="Veelaert D."/>
            <person name="Amelinckx M."/>
            <person name="de Loof A."/>
        </authorList>
    </citation>
    <scope>PROTEIN SEQUENCE</scope>
    <scope>AMIDATION AT PHE-10</scope>
    <scope>FUNCTION</scope>
    <scope>SUBCELLULAR LOCATION</scope>
    <scope>TISSUE SPECIFICITY</scope>
    <source>
        <tissue>Corpora cardiaca</tissue>
    </source>
</reference>